<dbReference type="EMBL" id="AK051532">
    <property type="protein sequence ID" value="BAC34665.1"/>
    <property type="molecule type" value="mRNA"/>
</dbReference>
<dbReference type="EMBL" id="AK054353">
    <property type="protein sequence ID" value="BAC35747.1"/>
    <property type="molecule type" value="mRNA"/>
</dbReference>
<dbReference type="EMBL" id="AK170302">
    <property type="protein sequence ID" value="BAE41699.1"/>
    <property type="molecule type" value="mRNA"/>
</dbReference>
<dbReference type="EMBL" id="BC007160">
    <property type="protein sequence ID" value="AAH07160.1"/>
    <property type="molecule type" value="mRNA"/>
</dbReference>
<dbReference type="EMBL" id="BC024911">
    <property type="protein sequence ID" value="AAH24911.1"/>
    <property type="molecule type" value="mRNA"/>
</dbReference>
<dbReference type="CCDS" id="CCDS19915.1"/>
<dbReference type="RefSeq" id="NP_083266.1">
    <property type="nucleotide sequence ID" value="NM_028990.5"/>
</dbReference>
<dbReference type="RefSeq" id="XP_006505015.1">
    <property type="nucleotide sequence ID" value="XM_006504952.5"/>
</dbReference>
<dbReference type="RefSeq" id="XP_006505016.1">
    <property type="nucleotide sequence ID" value="XM_006504953.5"/>
</dbReference>
<dbReference type="BioGRID" id="221586">
    <property type="interactions" value="1"/>
</dbReference>
<dbReference type="FunCoup" id="Q91VX9">
    <property type="interactions" value="2091"/>
</dbReference>
<dbReference type="STRING" id="10090.ENSMUSP00000031554"/>
<dbReference type="GlyCosmos" id="Q91VX9">
    <property type="glycosylation" value="4 sites, No reported glycans"/>
</dbReference>
<dbReference type="GlyGen" id="Q91VX9">
    <property type="glycosylation" value="4 sites"/>
</dbReference>
<dbReference type="iPTMnet" id="Q91VX9"/>
<dbReference type="PhosphoSitePlus" id="Q91VX9"/>
<dbReference type="SwissPalm" id="Q91VX9"/>
<dbReference type="PaxDb" id="10090-ENSMUSP00000031554"/>
<dbReference type="PeptideAtlas" id="Q91VX9"/>
<dbReference type="ProteomicsDB" id="260681"/>
<dbReference type="Pumba" id="Q91VX9"/>
<dbReference type="Antibodypedia" id="17378">
    <property type="antibodies" value="93 antibodies from 18 providers"/>
</dbReference>
<dbReference type="DNASU" id="101118"/>
<dbReference type="Ensembl" id="ENSMUST00000031554.9">
    <property type="protein sequence ID" value="ENSMUSP00000031554.3"/>
    <property type="gene ID" value="ENSMUSG00000029569.10"/>
</dbReference>
<dbReference type="GeneID" id="101118"/>
<dbReference type="KEGG" id="mmu:101118"/>
<dbReference type="UCSC" id="uc009ayn.1">
    <property type="organism name" value="mouse"/>
</dbReference>
<dbReference type="AGR" id="MGI:1921794"/>
<dbReference type="CTD" id="64418"/>
<dbReference type="MGI" id="MGI:1921794">
    <property type="gene designation" value="Tmem168"/>
</dbReference>
<dbReference type="VEuPathDB" id="HostDB:ENSMUSG00000029569"/>
<dbReference type="eggNOG" id="ENOG502QRB6">
    <property type="taxonomic scope" value="Eukaryota"/>
</dbReference>
<dbReference type="GeneTree" id="ENSGT00390000005941"/>
<dbReference type="HOGENOM" id="CLU_032315_0_0_1"/>
<dbReference type="InParanoid" id="Q91VX9"/>
<dbReference type="OMA" id="VNDQYIA"/>
<dbReference type="OrthoDB" id="5967342at2759"/>
<dbReference type="PhylomeDB" id="Q91VX9"/>
<dbReference type="TreeFam" id="TF328518"/>
<dbReference type="BioGRID-ORCS" id="101118">
    <property type="hits" value="0 hits in 77 CRISPR screens"/>
</dbReference>
<dbReference type="PRO" id="PR:Q91VX9"/>
<dbReference type="Proteomes" id="UP000000589">
    <property type="component" value="Chromosome 6"/>
</dbReference>
<dbReference type="RNAct" id="Q91VX9">
    <property type="molecule type" value="protein"/>
</dbReference>
<dbReference type="Bgee" id="ENSMUSG00000029569">
    <property type="expression patterns" value="Expressed in gonadal ridge and 263 other cell types or tissues"/>
</dbReference>
<dbReference type="ExpressionAtlas" id="Q91VX9">
    <property type="expression patterns" value="baseline and differential"/>
</dbReference>
<dbReference type="GO" id="GO:0031965">
    <property type="term" value="C:nuclear membrane"/>
    <property type="evidence" value="ECO:0000314"/>
    <property type="project" value="UniProtKB"/>
</dbReference>
<dbReference type="GO" id="GO:0030133">
    <property type="term" value="C:transport vesicle"/>
    <property type="evidence" value="ECO:0007669"/>
    <property type="project" value="Ensembl"/>
</dbReference>
<dbReference type="GO" id="GO:0017080">
    <property type="term" value="F:sodium channel regulator activity"/>
    <property type="evidence" value="ECO:0000250"/>
    <property type="project" value="UniProtKB"/>
</dbReference>
<dbReference type="GO" id="GO:2000058">
    <property type="term" value="P:regulation of ubiquitin-dependent protein catabolic process"/>
    <property type="evidence" value="ECO:0000315"/>
    <property type="project" value="MGI"/>
</dbReference>
<dbReference type="CDD" id="cd21494">
    <property type="entry name" value="TMEM168"/>
    <property type="match status" value="1"/>
</dbReference>
<dbReference type="InterPro" id="IPR029713">
    <property type="entry name" value="TMEM168"/>
</dbReference>
<dbReference type="PANTHER" id="PTHR14437">
    <property type="entry name" value="TRANSMEMBRANE PROTEIN 168"/>
    <property type="match status" value="1"/>
</dbReference>
<dbReference type="PANTHER" id="PTHR14437:SF2">
    <property type="entry name" value="TRANSMEMBRANE PROTEIN 168"/>
    <property type="match status" value="1"/>
</dbReference>
<gene>
    <name type="primary">Tmem168</name>
</gene>
<name>TM168_MOUSE</name>
<accession>Q91VX9</accession>
<accession>Q3TDA5</accession>
<proteinExistence type="evidence at protein level"/>
<organism>
    <name type="scientific">Mus musculus</name>
    <name type="common">Mouse</name>
    <dbReference type="NCBI Taxonomy" id="10090"/>
    <lineage>
        <taxon>Eukaryota</taxon>
        <taxon>Metazoa</taxon>
        <taxon>Chordata</taxon>
        <taxon>Craniata</taxon>
        <taxon>Vertebrata</taxon>
        <taxon>Euteleostomi</taxon>
        <taxon>Mammalia</taxon>
        <taxon>Eutheria</taxon>
        <taxon>Euarchontoglires</taxon>
        <taxon>Glires</taxon>
        <taxon>Rodentia</taxon>
        <taxon>Myomorpha</taxon>
        <taxon>Muroidea</taxon>
        <taxon>Muridae</taxon>
        <taxon>Murinae</taxon>
        <taxon>Mus</taxon>
        <taxon>Mus</taxon>
    </lineage>
</organism>
<reference key="1">
    <citation type="journal article" date="2005" name="Science">
        <title>The transcriptional landscape of the mammalian genome.</title>
        <authorList>
            <person name="Carninci P."/>
            <person name="Kasukawa T."/>
            <person name="Katayama S."/>
            <person name="Gough J."/>
            <person name="Frith M.C."/>
            <person name="Maeda N."/>
            <person name="Oyama R."/>
            <person name="Ravasi T."/>
            <person name="Lenhard B."/>
            <person name="Wells C."/>
            <person name="Kodzius R."/>
            <person name="Shimokawa K."/>
            <person name="Bajic V.B."/>
            <person name="Brenner S.E."/>
            <person name="Batalov S."/>
            <person name="Forrest A.R."/>
            <person name="Zavolan M."/>
            <person name="Davis M.J."/>
            <person name="Wilming L.G."/>
            <person name="Aidinis V."/>
            <person name="Allen J.E."/>
            <person name="Ambesi-Impiombato A."/>
            <person name="Apweiler R."/>
            <person name="Aturaliya R.N."/>
            <person name="Bailey T.L."/>
            <person name="Bansal M."/>
            <person name="Baxter L."/>
            <person name="Beisel K.W."/>
            <person name="Bersano T."/>
            <person name="Bono H."/>
            <person name="Chalk A.M."/>
            <person name="Chiu K.P."/>
            <person name="Choudhary V."/>
            <person name="Christoffels A."/>
            <person name="Clutterbuck D.R."/>
            <person name="Crowe M.L."/>
            <person name="Dalla E."/>
            <person name="Dalrymple B.P."/>
            <person name="de Bono B."/>
            <person name="Della Gatta G."/>
            <person name="di Bernardo D."/>
            <person name="Down T."/>
            <person name="Engstrom P."/>
            <person name="Fagiolini M."/>
            <person name="Faulkner G."/>
            <person name="Fletcher C.F."/>
            <person name="Fukushima T."/>
            <person name="Furuno M."/>
            <person name="Futaki S."/>
            <person name="Gariboldi M."/>
            <person name="Georgii-Hemming P."/>
            <person name="Gingeras T.R."/>
            <person name="Gojobori T."/>
            <person name="Green R.E."/>
            <person name="Gustincich S."/>
            <person name="Harbers M."/>
            <person name="Hayashi Y."/>
            <person name="Hensch T.K."/>
            <person name="Hirokawa N."/>
            <person name="Hill D."/>
            <person name="Huminiecki L."/>
            <person name="Iacono M."/>
            <person name="Ikeo K."/>
            <person name="Iwama A."/>
            <person name="Ishikawa T."/>
            <person name="Jakt M."/>
            <person name="Kanapin A."/>
            <person name="Katoh M."/>
            <person name="Kawasawa Y."/>
            <person name="Kelso J."/>
            <person name="Kitamura H."/>
            <person name="Kitano H."/>
            <person name="Kollias G."/>
            <person name="Krishnan S.P."/>
            <person name="Kruger A."/>
            <person name="Kummerfeld S.K."/>
            <person name="Kurochkin I.V."/>
            <person name="Lareau L.F."/>
            <person name="Lazarevic D."/>
            <person name="Lipovich L."/>
            <person name="Liu J."/>
            <person name="Liuni S."/>
            <person name="McWilliam S."/>
            <person name="Madan Babu M."/>
            <person name="Madera M."/>
            <person name="Marchionni L."/>
            <person name="Matsuda H."/>
            <person name="Matsuzawa S."/>
            <person name="Miki H."/>
            <person name="Mignone F."/>
            <person name="Miyake S."/>
            <person name="Morris K."/>
            <person name="Mottagui-Tabar S."/>
            <person name="Mulder N."/>
            <person name="Nakano N."/>
            <person name="Nakauchi H."/>
            <person name="Ng P."/>
            <person name="Nilsson R."/>
            <person name="Nishiguchi S."/>
            <person name="Nishikawa S."/>
            <person name="Nori F."/>
            <person name="Ohara O."/>
            <person name="Okazaki Y."/>
            <person name="Orlando V."/>
            <person name="Pang K.C."/>
            <person name="Pavan W.J."/>
            <person name="Pavesi G."/>
            <person name="Pesole G."/>
            <person name="Petrovsky N."/>
            <person name="Piazza S."/>
            <person name="Reed J."/>
            <person name="Reid J.F."/>
            <person name="Ring B.Z."/>
            <person name="Ringwald M."/>
            <person name="Rost B."/>
            <person name="Ruan Y."/>
            <person name="Salzberg S.L."/>
            <person name="Sandelin A."/>
            <person name="Schneider C."/>
            <person name="Schoenbach C."/>
            <person name="Sekiguchi K."/>
            <person name="Semple C.A."/>
            <person name="Seno S."/>
            <person name="Sessa L."/>
            <person name="Sheng Y."/>
            <person name="Shibata Y."/>
            <person name="Shimada H."/>
            <person name="Shimada K."/>
            <person name="Silva D."/>
            <person name="Sinclair B."/>
            <person name="Sperling S."/>
            <person name="Stupka E."/>
            <person name="Sugiura K."/>
            <person name="Sultana R."/>
            <person name="Takenaka Y."/>
            <person name="Taki K."/>
            <person name="Tammoja K."/>
            <person name="Tan S.L."/>
            <person name="Tang S."/>
            <person name="Taylor M.S."/>
            <person name="Tegner J."/>
            <person name="Teichmann S.A."/>
            <person name="Ueda H.R."/>
            <person name="van Nimwegen E."/>
            <person name="Verardo R."/>
            <person name="Wei C.L."/>
            <person name="Yagi K."/>
            <person name="Yamanishi H."/>
            <person name="Zabarovsky E."/>
            <person name="Zhu S."/>
            <person name="Zimmer A."/>
            <person name="Hide W."/>
            <person name="Bult C."/>
            <person name="Grimmond S.M."/>
            <person name="Teasdale R.D."/>
            <person name="Liu E.T."/>
            <person name="Brusic V."/>
            <person name="Quackenbush J."/>
            <person name="Wahlestedt C."/>
            <person name="Mattick J.S."/>
            <person name="Hume D.A."/>
            <person name="Kai C."/>
            <person name="Sasaki D."/>
            <person name="Tomaru Y."/>
            <person name="Fukuda S."/>
            <person name="Kanamori-Katayama M."/>
            <person name="Suzuki M."/>
            <person name="Aoki J."/>
            <person name="Arakawa T."/>
            <person name="Iida J."/>
            <person name="Imamura K."/>
            <person name="Itoh M."/>
            <person name="Kato T."/>
            <person name="Kawaji H."/>
            <person name="Kawagashira N."/>
            <person name="Kawashima T."/>
            <person name="Kojima M."/>
            <person name="Kondo S."/>
            <person name="Konno H."/>
            <person name="Nakano K."/>
            <person name="Ninomiya N."/>
            <person name="Nishio T."/>
            <person name="Okada M."/>
            <person name="Plessy C."/>
            <person name="Shibata K."/>
            <person name="Shiraki T."/>
            <person name="Suzuki S."/>
            <person name="Tagami M."/>
            <person name="Waki K."/>
            <person name="Watahiki A."/>
            <person name="Okamura-Oho Y."/>
            <person name="Suzuki H."/>
            <person name="Kawai J."/>
            <person name="Hayashizaki Y."/>
        </authorList>
    </citation>
    <scope>NUCLEOTIDE SEQUENCE [LARGE SCALE MRNA]</scope>
    <source>
        <strain>C57BL/6J</strain>
        <tissue>Ovary</tissue>
        <tissue>Spinal ganglion</tissue>
    </source>
</reference>
<reference key="2">
    <citation type="journal article" date="2004" name="Genome Res.">
        <title>The status, quality, and expansion of the NIH full-length cDNA project: the Mammalian Gene Collection (MGC).</title>
        <authorList>
            <consortium name="The MGC Project Team"/>
        </authorList>
    </citation>
    <scope>NUCLEOTIDE SEQUENCE [LARGE SCALE MRNA]</scope>
    <source>
        <strain>FVB/N</strain>
        <tissue>Mammary tumor</tissue>
    </source>
</reference>
<reference key="3">
    <citation type="journal article" date="2010" name="Cell">
        <title>A tissue-specific atlas of mouse protein phosphorylation and expression.</title>
        <authorList>
            <person name="Huttlin E.L."/>
            <person name="Jedrychowski M.P."/>
            <person name="Elias J.E."/>
            <person name="Goswami T."/>
            <person name="Rad R."/>
            <person name="Beausoleil S.A."/>
            <person name="Villen J."/>
            <person name="Haas W."/>
            <person name="Sowa M.E."/>
            <person name="Gygi S.P."/>
        </authorList>
    </citation>
    <scope>IDENTIFICATION BY MASS SPECTROMETRY [LARGE SCALE ANALYSIS]</scope>
    <source>
        <tissue>Kidney</tissue>
        <tissue>Lung</tissue>
        <tissue>Spleen</tissue>
    </source>
</reference>
<reference key="4">
    <citation type="journal article" date="2017" name="PLoS ONE">
        <title>Overexpression of transmembrane protein 168 in the mouse nucleus accumbens induces anxiety and sensorimotor gating deficit.</title>
        <authorList>
            <person name="Fu K."/>
            <person name="Miyamoto Y."/>
            <person name="Sumi K."/>
            <person name="Saika E."/>
            <person name="Muramatsu S.I."/>
            <person name="Uno K."/>
            <person name="Nitta A."/>
        </authorList>
    </citation>
    <scope>FUNCTION</scope>
</reference>
<reference key="5">
    <citation type="journal article" date="2020" name="FASEB J.">
        <title>Identification of transmembrane protein 168 mutation in familial Brugada syndrome.</title>
        <authorList>
            <person name="Shimizu A."/>
            <person name="Zankov D.P."/>
            <person name="Sato A."/>
            <person name="Komeno M."/>
            <person name="Toyoda F."/>
            <person name="Yamazaki S."/>
            <person name="Makita T."/>
            <person name="Noda T."/>
            <person name="Ikawa M."/>
            <person name="Asano Y."/>
            <person name="Miyashita Y."/>
            <person name="Takashima S."/>
            <person name="Morita H."/>
            <person name="Ishikawa T."/>
            <person name="Makita N."/>
            <person name="Hitosugi M."/>
            <person name="Matsuura H."/>
            <person name="Ohno S."/>
            <person name="Horie M."/>
            <person name="Ogita H."/>
        </authorList>
    </citation>
    <scope>SUBCELLULAR LOCATION</scope>
    <scope>FUNCTION</scope>
</reference>
<comment type="function">
    <text evidence="2 3">Plays a key role in maintaining the cardiac electrical stability by modulating cell surface expression of SCN5A (PubMed:32175648). Plays a role i the modulation of anxiety behavior by regulating GABAergic neuronal system in the nucleus accumbens (PubMed:29211814).</text>
</comment>
<comment type="subcellular location">
    <subcellularLocation>
        <location evidence="3">Nucleus membrane</location>
        <topology evidence="1">Multi-pass membrane protein</topology>
    </subcellularLocation>
</comment>
<comment type="similarity">
    <text evidence="4">Belongs to the TMEM168 family.</text>
</comment>
<keyword id="KW-0325">Glycoprotein</keyword>
<keyword id="KW-0472">Membrane</keyword>
<keyword id="KW-0539">Nucleus</keyword>
<keyword id="KW-1185">Reference proteome</keyword>
<keyword id="KW-0812">Transmembrane</keyword>
<keyword id="KW-1133">Transmembrane helix</keyword>
<sequence length="697" mass="79674">MCRSLRYCVSHCLYLAMTRLEEVNREVNMHSSVRYLGYLARINLLVAICLGLYVRWEKTANSLILVIFILGLFVLGIASILYYYFSMEAASLSLSNLWFGFLLGLLCFLDNSSFKSDVKEETTKYLLLTSIVLRILCALVERISGYVRHRPTLLTTVEFLELVGFAIASTTMLVEKSLSVILLVMALAMLIIDLRMKSFLAIPNLIIFSVLLFFSSLETPQNPIAFACFFICLVTDPFLDIYFSGLSVTERWKPFLHRGRICRRLSVLFTAMIELTFFILSAFKLRDTHLWYFVIPGFSIFGFFWMICHIIFLLTLWGFHTKLNDCHKVYINHRADNNSLDRIMASKGMRHFCLISEQLVFFSLLATAILGAVSWQPTNGIFLSMFLIVLPLESMAHGLFHELGNCLGGTSVGYAIVIPTNFCSPDGQPTLLPPEHVQELNLRSTGMLNAIQRFFAYHMIETYGCDYSTSGLSFDTLHSKLKAFLELRTVDGPRHDTYVLYYSGHTHGSGEWALAGGDILRLDTLLEWWREKNGSFCSRLIIILDSENSTPWVKEVRKINDQYVAVQGAELAKTVDIEEADPPQLGDFTRDWVEYNCNSTNNICWTEKGRTVRAVYGVSKRWSDYTLHLPTGSDVAKHWMLHFPRVTYPLVHLANWLCGLNLFWVCKACFRCLKRLKMSWFLPTVLDTGQGFKLVKS</sequence>
<feature type="chain" id="PRO_0000284631" description="Transmembrane protein 168">
    <location>
        <begin position="1"/>
        <end position="697"/>
    </location>
</feature>
<feature type="transmembrane region" description="Helical" evidence="1">
    <location>
        <begin position="36"/>
        <end position="56"/>
    </location>
</feature>
<feature type="transmembrane region" description="Helical" evidence="1">
    <location>
        <begin position="63"/>
        <end position="83"/>
    </location>
</feature>
<feature type="transmembrane region" description="Helical" evidence="1">
    <location>
        <begin position="89"/>
        <end position="109"/>
    </location>
</feature>
<feature type="transmembrane region" description="Helical" evidence="1">
    <location>
        <begin position="172"/>
        <end position="192"/>
    </location>
</feature>
<feature type="transmembrane region" description="Helical" evidence="1">
    <location>
        <begin position="199"/>
        <end position="219"/>
    </location>
</feature>
<feature type="transmembrane region" description="Helical" evidence="1">
    <location>
        <begin position="223"/>
        <end position="243"/>
    </location>
</feature>
<feature type="transmembrane region" description="Helical" evidence="1">
    <location>
        <begin position="265"/>
        <end position="285"/>
    </location>
</feature>
<feature type="transmembrane region" description="Helical" evidence="1">
    <location>
        <begin position="293"/>
        <end position="313"/>
    </location>
</feature>
<feature type="transmembrane region" description="Helical" evidence="1">
    <location>
        <begin position="352"/>
        <end position="372"/>
    </location>
</feature>
<feature type="transmembrane region" description="Helical" evidence="1">
    <location>
        <begin position="380"/>
        <end position="400"/>
    </location>
</feature>
<feature type="glycosylation site" description="N-linked (GlcNAc...) asparagine" evidence="1">
    <location>
        <position position="111"/>
    </location>
</feature>
<feature type="glycosylation site" description="N-linked (GlcNAc...) asparagine" evidence="1">
    <location>
        <position position="337"/>
    </location>
</feature>
<feature type="glycosylation site" description="N-linked (GlcNAc...) asparagine" evidence="1">
    <location>
        <position position="533"/>
    </location>
</feature>
<feature type="glycosylation site" description="N-linked (GlcNAc...) asparagine" evidence="1">
    <location>
        <position position="598"/>
    </location>
</feature>
<feature type="sequence conflict" description="In Ref. 1; BAE41699." evidence="4" ref="1">
    <original>F</original>
    <variation>L</variation>
    <location>
        <position position="303"/>
    </location>
</feature>
<feature type="sequence conflict" description="In Ref. 1; BAE41699." evidence="4" ref="1">
    <original>L</original>
    <variation>P</variation>
    <location>
        <position position="525"/>
    </location>
</feature>
<protein>
    <recommendedName>
        <fullName>Transmembrane protein 168</fullName>
    </recommendedName>
</protein>
<evidence type="ECO:0000255" key="1"/>
<evidence type="ECO:0000269" key="2">
    <source>
    </source>
</evidence>
<evidence type="ECO:0000269" key="3">
    <source>
    </source>
</evidence>
<evidence type="ECO:0000305" key="4"/>